<name>RS10_DESAL</name>
<dbReference type="EMBL" id="CP001322">
    <property type="protein sequence ID" value="ACL03613.1"/>
    <property type="molecule type" value="Genomic_DNA"/>
</dbReference>
<dbReference type="SMR" id="B8FET6"/>
<dbReference type="KEGG" id="dal:Dalk_1916"/>
<dbReference type="eggNOG" id="COG0051">
    <property type="taxonomic scope" value="Bacteria"/>
</dbReference>
<dbReference type="HOGENOM" id="CLU_122625_1_3_7"/>
<dbReference type="Proteomes" id="UP000000739">
    <property type="component" value="Chromosome"/>
</dbReference>
<dbReference type="GO" id="GO:1990904">
    <property type="term" value="C:ribonucleoprotein complex"/>
    <property type="evidence" value="ECO:0007669"/>
    <property type="project" value="UniProtKB-KW"/>
</dbReference>
<dbReference type="GO" id="GO:0005840">
    <property type="term" value="C:ribosome"/>
    <property type="evidence" value="ECO:0007669"/>
    <property type="project" value="UniProtKB-KW"/>
</dbReference>
<dbReference type="GO" id="GO:0003735">
    <property type="term" value="F:structural constituent of ribosome"/>
    <property type="evidence" value="ECO:0007669"/>
    <property type="project" value="InterPro"/>
</dbReference>
<dbReference type="GO" id="GO:0000049">
    <property type="term" value="F:tRNA binding"/>
    <property type="evidence" value="ECO:0007669"/>
    <property type="project" value="UniProtKB-UniRule"/>
</dbReference>
<dbReference type="GO" id="GO:0006412">
    <property type="term" value="P:translation"/>
    <property type="evidence" value="ECO:0007669"/>
    <property type="project" value="UniProtKB-UniRule"/>
</dbReference>
<dbReference type="FunFam" id="3.30.70.600:FF:000001">
    <property type="entry name" value="30S ribosomal protein S10"/>
    <property type="match status" value="1"/>
</dbReference>
<dbReference type="Gene3D" id="3.30.70.600">
    <property type="entry name" value="Ribosomal protein S10 domain"/>
    <property type="match status" value="1"/>
</dbReference>
<dbReference type="HAMAP" id="MF_00508">
    <property type="entry name" value="Ribosomal_uS10"/>
    <property type="match status" value="1"/>
</dbReference>
<dbReference type="InterPro" id="IPR001848">
    <property type="entry name" value="Ribosomal_uS10"/>
</dbReference>
<dbReference type="InterPro" id="IPR018268">
    <property type="entry name" value="Ribosomal_uS10_CS"/>
</dbReference>
<dbReference type="InterPro" id="IPR027486">
    <property type="entry name" value="Ribosomal_uS10_dom"/>
</dbReference>
<dbReference type="InterPro" id="IPR036838">
    <property type="entry name" value="Ribosomal_uS10_dom_sf"/>
</dbReference>
<dbReference type="NCBIfam" id="NF001861">
    <property type="entry name" value="PRK00596.1"/>
    <property type="match status" value="1"/>
</dbReference>
<dbReference type="NCBIfam" id="TIGR01049">
    <property type="entry name" value="rpsJ_bact"/>
    <property type="match status" value="1"/>
</dbReference>
<dbReference type="PANTHER" id="PTHR11700">
    <property type="entry name" value="30S RIBOSOMAL PROTEIN S10 FAMILY MEMBER"/>
    <property type="match status" value="1"/>
</dbReference>
<dbReference type="Pfam" id="PF00338">
    <property type="entry name" value="Ribosomal_S10"/>
    <property type="match status" value="1"/>
</dbReference>
<dbReference type="PRINTS" id="PR00971">
    <property type="entry name" value="RIBOSOMALS10"/>
</dbReference>
<dbReference type="SMART" id="SM01403">
    <property type="entry name" value="Ribosomal_S10"/>
    <property type="match status" value="1"/>
</dbReference>
<dbReference type="SUPFAM" id="SSF54999">
    <property type="entry name" value="Ribosomal protein S10"/>
    <property type="match status" value="1"/>
</dbReference>
<dbReference type="PROSITE" id="PS00361">
    <property type="entry name" value="RIBOSOMAL_S10"/>
    <property type="match status" value="1"/>
</dbReference>
<comment type="function">
    <text evidence="1">Involved in the binding of tRNA to the ribosomes.</text>
</comment>
<comment type="subunit">
    <text evidence="1">Part of the 30S ribosomal subunit.</text>
</comment>
<comment type="similarity">
    <text evidence="1">Belongs to the universal ribosomal protein uS10 family.</text>
</comment>
<proteinExistence type="inferred from homology"/>
<accession>B8FET6</accession>
<protein>
    <recommendedName>
        <fullName evidence="1">Small ribosomal subunit protein uS10</fullName>
    </recommendedName>
    <alternativeName>
        <fullName evidence="2">30S ribosomal protein S10</fullName>
    </alternativeName>
</protein>
<evidence type="ECO:0000255" key="1">
    <source>
        <dbReference type="HAMAP-Rule" id="MF_00508"/>
    </source>
</evidence>
<evidence type="ECO:0000305" key="2"/>
<gene>
    <name evidence="1" type="primary">rpsJ</name>
    <name type="ordered locus">Dalk_1916</name>
</gene>
<sequence length="103" mass="11772">MLMNDKIRIRLKAYDHKLLDQSAADIVDTARRTGAKVVGPIPLPTRINKYCVLRSPHVDKKSREQFEVRTHKRLLDILEPTQQTVDALMKLDLSPGVDVEIKV</sequence>
<feature type="chain" id="PRO_1000206579" description="Small ribosomal subunit protein uS10">
    <location>
        <begin position="1"/>
        <end position="103"/>
    </location>
</feature>
<keyword id="KW-1185">Reference proteome</keyword>
<keyword id="KW-0687">Ribonucleoprotein</keyword>
<keyword id="KW-0689">Ribosomal protein</keyword>
<organism>
    <name type="scientific">Desulfatibacillum aliphaticivorans</name>
    <dbReference type="NCBI Taxonomy" id="218208"/>
    <lineage>
        <taxon>Bacteria</taxon>
        <taxon>Pseudomonadati</taxon>
        <taxon>Thermodesulfobacteriota</taxon>
        <taxon>Desulfobacteria</taxon>
        <taxon>Desulfobacterales</taxon>
        <taxon>Desulfatibacillaceae</taxon>
        <taxon>Desulfatibacillum</taxon>
    </lineage>
</organism>
<reference key="1">
    <citation type="journal article" date="2012" name="Environ. Microbiol.">
        <title>The genome sequence of Desulfatibacillum alkenivorans AK-01: a blueprint for anaerobic alkane oxidation.</title>
        <authorList>
            <person name="Callaghan A.V."/>
            <person name="Morris B.E."/>
            <person name="Pereira I.A."/>
            <person name="McInerney M.J."/>
            <person name="Austin R.N."/>
            <person name="Groves J.T."/>
            <person name="Kukor J.J."/>
            <person name="Suflita J.M."/>
            <person name="Young L.Y."/>
            <person name="Zylstra G.J."/>
            <person name="Wawrik B."/>
        </authorList>
    </citation>
    <scope>NUCLEOTIDE SEQUENCE [LARGE SCALE GENOMIC DNA]</scope>
    <source>
        <strain>AK-01</strain>
    </source>
</reference>